<protein>
    <recommendedName>
        <fullName evidence="1">Small ribosomal subunit protein uS2</fullName>
    </recommendedName>
    <alternativeName>
        <fullName>30S ribosomal protein S2</fullName>
    </alternativeName>
</protein>
<name>RS2_HELPY</name>
<keyword id="KW-1185">Reference proteome</keyword>
<keyword id="KW-0687">Ribonucleoprotein</keyword>
<keyword id="KW-0689">Ribosomal protein</keyword>
<reference key="1">
    <citation type="journal article" date="1997" name="Nature">
        <title>The complete genome sequence of the gastric pathogen Helicobacter pylori.</title>
        <authorList>
            <person name="Tomb J.-F."/>
            <person name="White O."/>
            <person name="Kerlavage A.R."/>
            <person name="Clayton R.A."/>
            <person name="Sutton G.G."/>
            <person name="Fleischmann R.D."/>
            <person name="Ketchum K.A."/>
            <person name="Klenk H.-P."/>
            <person name="Gill S.R."/>
            <person name="Dougherty B.A."/>
            <person name="Nelson K.E."/>
            <person name="Quackenbush J."/>
            <person name="Zhou L."/>
            <person name="Kirkness E.F."/>
            <person name="Peterson S.N."/>
            <person name="Loftus B.J."/>
            <person name="Richardson D.L."/>
            <person name="Dodson R.J."/>
            <person name="Khalak H.G."/>
            <person name="Glodek A."/>
            <person name="McKenney K."/>
            <person name="FitzGerald L.M."/>
            <person name="Lee N."/>
            <person name="Adams M.D."/>
            <person name="Hickey E.K."/>
            <person name="Berg D.E."/>
            <person name="Gocayne J.D."/>
            <person name="Utterback T.R."/>
            <person name="Peterson J.D."/>
            <person name="Kelley J.M."/>
            <person name="Cotton M.D."/>
            <person name="Weidman J.F."/>
            <person name="Fujii C."/>
            <person name="Bowman C."/>
            <person name="Watthey L."/>
            <person name="Wallin E."/>
            <person name="Hayes W.S."/>
            <person name="Borodovsky M."/>
            <person name="Karp P.D."/>
            <person name="Smith H.O."/>
            <person name="Fraser C.M."/>
            <person name="Venter J.C."/>
        </authorList>
    </citation>
    <scope>NUCLEOTIDE SEQUENCE [LARGE SCALE GENOMIC DNA]</scope>
    <source>
        <strain>ATCC 700392 / 26695</strain>
    </source>
</reference>
<sequence>MVTMKDLLECGVHFGHQTRRWNPKTKKFIFGVRKNIHIIDLQKTLRYFRYTYNIVRDASAQGKSIMFVGTKKQANETLKEFAESIQVPYVNYRWLGGMLTNFSTIRKSVRKLEIIEEMENSGQIDLLTKKEKLMILRKKEKLDKYLGGVRHMKKIPDMIFVIDVAKEKIAVAEARKLHIPIVAPLDTNCDPDLVDYPIPGNDDAIRSIRLFCKEMSEAILEGRELMQEEIVHANENSEEIEYVSHEEKEEMLAEIQKEITQGAE</sequence>
<proteinExistence type="inferred from homology"/>
<dbReference type="EMBL" id="AE000511">
    <property type="protein sequence ID" value="AAD08594.1"/>
    <property type="molecule type" value="Genomic_DNA"/>
</dbReference>
<dbReference type="PIR" id="B64714">
    <property type="entry name" value="B64714"/>
</dbReference>
<dbReference type="RefSeq" id="NP_208345.1">
    <property type="nucleotide sequence ID" value="NC_000915.1"/>
</dbReference>
<dbReference type="RefSeq" id="WP_000258283.1">
    <property type="nucleotide sequence ID" value="NC_018939.1"/>
</dbReference>
<dbReference type="SMR" id="P56009"/>
<dbReference type="FunCoup" id="P56009">
    <property type="interactions" value="466"/>
</dbReference>
<dbReference type="IntAct" id="P56009">
    <property type="interactions" value="2"/>
</dbReference>
<dbReference type="STRING" id="85962.HP_1554"/>
<dbReference type="PaxDb" id="85962-C694_08050"/>
<dbReference type="EnsemblBacteria" id="AAD08594">
    <property type="protein sequence ID" value="AAD08594"/>
    <property type="gene ID" value="HP_1554"/>
</dbReference>
<dbReference type="KEGG" id="heo:C694_08050"/>
<dbReference type="KEGG" id="hpy:HP_1554"/>
<dbReference type="PATRIC" id="fig|85962.47.peg.1669"/>
<dbReference type="eggNOG" id="COG0052">
    <property type="taxonomic scope" value="Bacteria"/>
</dbReference>
<dbReference type="InParanoid" id="P56009"/>
<dbReference type="OrthoDB" id="9808036at2"/>
<dbReference type="PhylomeDB" id="P56009"/>
<dbReference type="Proteomes" id="UP000000429">
    <property type="component" value="Chromosome"/>
</dbReference>
<dbReference type="GO" id="GO:0022627">
    <property type="term" value="C:cytosolic small ribosomal subunit"/>
    <property type="evidence" value="ECO:0000318"/>
    <property type="project" value="GO_Central"/>
</dbReference>
<dbReference type="GO" id="GO:0003735">
    <property type="term" value="F:structural constituent of ribosome"/>
    <property type="evidence" value="ECO:0000318"/>
    <property type="project" value="GO_Central"/>
</dbReference>
<dbReference type="GO" id="GO:0006412">
    <property type="term" value="P:translation"/>
    <property type="evidence" value="ECO:0007669"/>
    <property type="project" value="UniProtKB-UniRule"/>
</dbReference>
<dbReference type="CDD" id="cd01425">
    <property type="entry name" value="RPS2"/>
    <property type="match status" value="1"/>
</dbReference>
<dbReference type="FunFam" id="1.10.287.610:FF:000001">
    <property type="entry name" value="30S ribosomal protein S2"/>
    <property type="match status" value="1"/>
</dbReference>
<dbReference type="Gene3D" id="3.40.50.10490">
    <property type="entry name" value="Glucose-6-phosphate isomerase like protein, domain 1"/>
    <property type="match status" value="1"/>
</dbReference>
<dbReference type="Gene3D" id="1.10.287.610">
    <property type="entry name" value="Helix hairpin bin"/>
    <property type="match status" value="1"/>
</dbReference>
<dbReference type="HAMAP" id="MF_00291_B">
    <property type="entry name" value="Ribosomal_uS2_B"/>
    <property type="match status" value="1"/>
</dbReference>
<dbReference type="InterPro" id="IPR001865">
    <property type="entry name" value="Ribosomal_uS2"/>
</dbReference>
<dbReference type="InterPro" id="IPR005706">
    <property type="entry name" value="Ribosomal_uS2_bac/mit/plastid"/>
</dbReference>
<dbReference type="InterPro" id="IPR018130">
    <property type="entry name" value="Ribosomal_uS2_CS"/>
</dbReference>
<dbReference type="InterPro" id="IPR023591">
    <property type="entry name" value="Ribosomal_uS2_flav_dom_sf"/>
</dbReference>
<dbReference type="NCBIfam" id="TIGR01011">
    <property type="entry name" value="rpsB_bact"/>
    <property type="match status" value="1"/>
</dbReference>
<dbReference type="PANTHER" id="PTHR12534">
    <property type="entry name" value="30S RIBOSOMAL PROTEIN S2 PROKARYOTIC AND ORGANELLAR"/>
    <property type="match status" value="1"/>
</dbReference>
<dbReference type="PANTHER" id="PTHR12534:SF0">
    <property type="entry name" value="SMALL RIBOSOMAL SUBUNIT PROTEIN US2M"/>
    <property type="match status" value="1"/>
</dbReference>
<dbReference type="Pfam" id="PF00318">
    <property type="entry name" value="Ribosomal_S2"/>
    <property type="match status" value="1"/>
</dbReference>
<dbReference type="PRINTS" id="PR00395">
    <property type="entry name" value="RIBOSOMALS2"/>
</dbReference>
<dbReference type="SUPFAM" id="SSF52313">
    <property type="entry name" value="Ribosomal protein S2"/>
    <property type="match status" value="1"/>
</dbReference>
<dbReference type="PROSITE" id="PS00962">
    <property type="entry name" value="RIBOSOMAL_S2_1"/>
    <property type="match status" value="1"/>
</dbReference>
<dbReference type="PROSITE" id="PS00963">
    <property type="entry name" value="RIBOSOMAL_S2_2"/>
    <property type="match status" value="1"/>
</dbReference>
<gene>
    <name type="primary">rpsB</name>
    <name type="ordered locus">HP_1554</name>
</gene>
<evidence type="ECO:0000305" key="1"/>
<comment type="similarity">
    <text evidence="1">Belongs to the universal ribosomal protein uS2 family.</text>
</comment>
<accession>P56009</accession>
<feature type="chain" id="PRO_0000134178" description="Small ribosomal subunit protein uS2">
    <location>
        <begin position="1"/>
        <end position="264"/>
    </location>
</feature>
<organism>
    <name type="scientific">Helicobacter pylori (strain ATCC 700392 / 26695)</name>
    <name type="common">Campylobacter pylori</name>
    <dbReference type="NCBI Taxonomy" id="85962"/>
    <lineage>
        <taxon>Bacteria</taxon>
        <taxon>Pseudomonadati</taxon>
        <taxon>Campylobacterota</taxon>
        <taxon>Epsilonproteobacteria</taxon>
        <taxon>Campylobacterales</taxon>
        <taxon>Helicobacteraceae</taxon>
        <taxon>Helicobacter</taxon>
    </lineage>
</organism>